<evidence type="ECO:0000250" key="1"/>
<evidence type="ECO:0000250" key="2">
    <source>
        <dbReference type="UniProtKB" id="O00763"/>
    </source>
</evidence>
<evidence type="ECO:0000250" key="3">
    <source>
        <dbReference type="UniProtKB" id="Q13085"/>
    </source>
</evidence>
<evidence type="ECO:0000250" key="4">
    <source>
        <dbReference type="UniProtKB" id="Q5SWU9"/>
    </source>
</evidence>
<evidence type="ECO:0000255" key="5">
    <source>
        <dbReference type="PROSITE-ProRule" id="PRU00409"/>
    </source>
</evidence>
<evidence type="ECO:0000255" key="6">
    <source>
        <dbReference type="PROSITE-ProRule" id="PRU01066"/>
    </source>
</evidence>
<evidence type="ECO:0000255" key="7">
    <source>
        <dbReference type="PROSITE-ProRule" id="PRU01136"/>
    </source>
</evidence>
<evidence type="ECO:0000255" key="8">
    <source>
        <dbReference type="PROSITE-ProRule" id="PRU01137"/>
    </source>
</evidence>
<evidence type="ECO:0000255" key="9">
    <source>
        <dbReference type="PROSITE-ProRule" id="PRU01138"/>
    </source>
</evidence>
<evidence type="ECO:0000256" key="10">
    <source>
        <dbReference type="SAM" id="MobiDB-lite"/>
    </source>
</evidence>
<gene>
    <name type="primary">accA</name>
    <name type="ORF">DDB_G0288387</name>
</gene>
<keyword id="KW-0067">ATP-binding</keyword>
<keyword id="KW-0092">Biotin</keyword>
<keyword id="KW-0963">Cytoplasm</keyword>
<keyword id="KW-0275">Fatty acid biosynthesis</keyword>
<keyword id="KW-0276">Fatty acid metabolism</keyword>
<keyword id="KW-0436">Ligase</keyword>
<keyword id="KW-0444">Lipid biosynthesis</keyword>
<keyword id="KW-0443">Lipid metabolism</keyword>
<keyword id="KW-0464">Manganese</keyword>
<keyword id="KW-0479">Metal-binding</keyword>
<keyword id="KW-0511">Multifunctional enzyme</keyword>
<keyword id="KW-0547">Nucleotide-binding</keyword>
<keyword id="KW-1185">Reference proteome</keyword>
<sequence length="2282" mass="256735">MIEINEYIKKLGGDKNIEKILIANNGIAAVKAIRSVRKWAYTNFGNERAIKFVVMATPEDMKANAEYIRMADQILQVPGGSNNNNYANVDIIVDFAERAGVQAVWAGWGHASENPRLPDLLSKTETGIVFIGPPAKAMADLGDKIASTIVAQSARVACVPWSGSGLKVDYSECNGVPSEIYGRACINSVEEARECAQRVGFPAMIKASEGGGGKGIRKVTSMEDLESSFRQVQNEVPGSPIFFMKLVSNARHLEVQIVADRHGEAISLNGRDCSVQRRHQKIIEEGPAIAPTPQVWEEMERAAVRLVKEVGYVGAGTVEYLFAEGEYYFLELNPRLQVEHPVTEQITGVNLPATQLQIAMGIPLHRIPDIRKLYGRTGDDLYGDSMIDLHDFTKRNPPAGHCIAVRITGENPDEGFKPTSGQIHELTFRSTPNIWGYFSVGAKGGLHEYADSQFGHIFANGATREEARKTIILGLKEISIRGDIRTPVEYIIHLLESKDFKENHIHTGWLDQLISEKIQTKKPETMIVVLCGAIYKASTIFSTKIQEFSNQLSNGQLPSLELLNNSLPIELIYNNVKYQFEVSRTGINNYSVCLKNDKSAVSIDSSVIMLSDSGLLILLNGSTHVCYGREDVIGLSLMIDSKTCVFSQEYDPSILRTSSPGKLVRYLVDDGSLVVKGTPFAEIEVMKMYMPLLVPEKGIIKFVLTEGSVMAPGAIIANLELSDQSSIQKSTVFTGSLTKMSPPTLIGNKPHQLLNYTLGKISNVLCGYESNDLNQLLNDTIKQLSNQKLPLFEFKEQLSIVQSRIPQSLFKLINDELNKFEFNNDDDDEDDSELFNSKNLQLSISLYLNKLLLENEQLSIAIQLLIKPIILLAEKYNDGVSFAAINIFKNYLEEFIQIETNLQNKNIQTVLKSIRPTYKDNISKVVDIAQSLHPQSKKYKFILLLLNKIQEQGLVCDFVEQFKKLSSLGGNCMEISLKAKHIMVHSQLPSNKQRSNDLINSLKSILNVNNEQQQQVDEKVQDNKDEKISKLSKQTNEISDILIPMFFNESNNDDDIRKLAMEVYVRHSYRSYYVEDTKVTLSNDEGSSGFSFIEWHFYINLPQQSNLGGSNSGSPTYGSPLIRSISSSGGSSGGSGFQISPRPSMSIFNGLSMLRTDSTDSLTAMEDQTKLRYGMMVFFENEKKFEEKLPLILTRYNEENNKKSQLSLSPNESTDILSVIISIYPESISQENQAISSFQSILKGYIKELSIARIRRITFICCGGDEGKPLKYFTFRERHMYMEDPIFRHIEPAMAYHLEVRKLSNFDITHVPTTSQRIHLYYAQEKGKKETDPDADRSFFVRSVIRYSDLYGHSNEIKVDILLSQIETLLSESIESLEIAMSNKKYEKAQNHSIFLNVMPEVMFDEKMIGYVVQEIGDRLGKRLWKLRVGRVEVRGRIRKGDGLIPVRFFVQNPTGYAFQVQCYYEQQNSIGQMVFAVVPGSSKGSWEGLPVDTPYPIMDAVQRNRFKAQRLDTTYCYDYPDLFREAMQNIWMEFMESNKTNPVKVYPSSRGVLESVELILPSTINTDFPPSIPLDQLPEESKPKLEETYRPIGYNDIGMVAWRMTFYTPEYPLGRQAIVIANDITHQIGSFGPQEDMLFKLASELARKEKIPRIYLSSNSGARIGLADEIKSKFKVTWNVPSDPTKGIKNLYLTNNDYQALKDSVIAYQDTTDKDKWIIHDIIGQKNGIGVENLSWSGLIAGETSQAYNEIFTITLVSGRSVGIGAYLVRLGQRTIQNDAPIILTGASALNKVLGKEVYESNQQLGGSQIMYPNGVSHIIVNDELRGITNVLQWLSFVPKSGGEMVPIISPIDSPHRDIEFDPSNSINGKCDTRHLIAGLQSELDPNYWISGMFDKDSFMETLAGWANTVITGRARLGGIPVGIIAVETKSVEKIIPADPANPLSYEQVNTQAGQVWYPDSSFKTAQAIADFNNGEELPLMILANWRGFSGGMRDMFDEILKFGSMIVDNLRNYKQPVMVYIPPFAELRGGAWVVLDSTINLDMMEMYCSEEGRGGVLEPNGIAEIKYRDPELIKTMHRLDPKLIEWDKSIPIGVSVNGLDQSQKTIKSQIQQREKELLGIYQQIAIKFADLHDTPGRMKAKGVIKQMVPWKSARSFFYDRIKRRLFEEDKLKLIDKSHPGLNRQSKLNLLETWIKQILGNNQSVDYHQNDKLISSTIESNSHIINDKIIDLSKQYAINQILNFVQSDSESIVDGFQNLLPFISTQQKEFLFESLKKDLNK</sequence>
<comment type="function">
    <text evidence="3">Catalyzes the rate-limiting reaction in the biogenesis of long-chain fatty acids. Carries out three functions: biotin carboxyl carrier protein, biotin carboxylase and carboxyltransferase.</text>
</comment>
<comment type="catalytic activity">
    <reaction evidence="4">
        <text>hydrogencarbonate + acetyl-CoA + ATP = malonyl-CoA + ADP + phosphate + H(+)</text>
        <dbReference type="Rhea" id="RHEA:11308"/>
        <dbReference type="ChEBI" id="CHEBI:15378"/>
        <dbReference type="ChEBI" id="CHEBI:17544"/>
        <dbReference type="ChEBI" id="CHEBI:30616"/>
        <dbReference type="ChEBI" id="CHEBI:43474"/>
        <dbReference type="ChEBI" id="CHEBI:57288"/>
        <dbReference type="ChEBI" id="CHEBI:57384"/>
        <dbReference type="ChEBI" id="CHEBI:456216"/>
        <dbReference type="EC" id="6.4.1.2"/>
    </reaction>
</comment>
<comment type="catalytic activity">
    <reaction evidence="4">
        <text>N(6)-biotinyl-L-lysyl-[protein] + hydrogencarbonate + ATP = N(6)-carboxybiotinyl-L-lysyl-[protein] + ADP + phosphate + H(+)</text>
        <dbReference type="Rhea" id="RHEA:13501"/>
        <dbReference type="Rhea" id="RHEA-COMP:10505"/>
        <dbReference type="Rhea" id="RHEA-COMP:10506"/>
        <dbReference type="ChEBI" id="CHEBI:15378"/>
        <dbReference type="ChEBI" id="CHEBI:17544"/>
        <dbReference type="ChEBI" id="CHEBI:30616"/>
        <dbReference type="ChEBI" id="CHEBI:43474"/>
        <dbReference type="ChEBI" id="CHEBI:83144"/>
        <dbReference type="ChEBI" id="CHEBI:83145"/>
        <dbReference type="ChEBI" id="CHEBI:456216"/>
        <dbReference type="EC" id="6.3.4.14"/>
    </reaction>
</comment>
<comment type="cofactor">
    <cofactor evidence="2">
        <name>biotin</name>
        <dbReference type="ChEBI" id="CHEBI:57586"/>
    </cofactor>
</comment>
<comment type="cofactor">
    <cofactor evidence="1">
        <name>Mn(2+)</name>
        <dbReference type="ChEBI" id="CHEBI:29035"/>
    </cofactor>
    <text evidence="1">Binds 2 manganese ions per subunit.</text>
</comment>
<comment type="pathway">
    <text>Lipid metabolism; malonyl-CoA biosynthesis; malonyl-CoA from acetyl-CoA: step 1/1.</text>
</comment>
<comment type="subcellular location">
    <subcellularLocation>
        <location evidence="1">Cytoplasm</location>
    </subcellularLocation>
</comment>
<organism>
    <name type="scientific">Dictyostelium discoideum</name>
    <name type="common">Social amoeba</name>
    <dbReference type="NCBI Taxonomy" id="44689"/>
    <lineage>
        <taxon>Eukaryota</taxon>
        <taxon>Amoebozoa</taxon>
        <taxon>Evosea</taxon>
        <taxon>Eumycetozoa</taxon>
        <taxon>Dictyostelia</taxon>
        <taxon>Dictyosteliales</taxon>
        <taxon>Dictyosteliaceae</taxon>
        <taxon>Dictyostelium</taxon>
    </lineage>
</organism>
<protein>
    <recommendedName>
        <fullName>Acetyl-CoA carboxylase</fullName>
        <ecNumber>6.4.1.2</ecNumber>
    </recommendedName>
    <alternativeName>
        <fullName>ACC-alpha</fullName>
    </alternativeName>
    <domain>
        <recommendedName>
            <fullName>Biotin carboxylase</fullName>
            <ecNumber>6.3.4.14</ecNumber>
        </recommendedName>
    </domain>
</protein>
<feature type="chain" id="PRO_0000328220" description="Acetyl-CoA carboxylase">
    <location>
        <begin position="1"/>
        <end position="2282"/>
    </location>
</feature>
<feature type="domain" description="Biotin carboxylation">
    <location>
        <begin position="16"/>
        <end position="515"/>
    </location>
</feature>
<feature type="domain" description="ATP-grasp" evidence="5">
    <location>
        <begin position="170"/>
        <end position="360"/>
    </location>
</feature>
<feature type="domain" description="Biotinyl-binding" evidence="6">
    <location>
        <begin position="646"/>
        <end position="720"/>
    </location>
</feature>
<feature type="domain" description="CoA carboxyltransferase N-terminal" evidence="7">
    <location>
        <begin position="1495"/>
        <end position="1851"/>
    </location>
</feature>
<feature type="domain" description="CoA carboxyltransferase C-terminal" evidence="8">
    <location>
        <begin position="1852"/>
        <end position="2178"/>
    </location>
</feature>
<feature type="region of interest" description="Disordered" evidence="10">
    <location>
        <begin position="1109"/>
        <end position="1141"/>
    </location>
</feature>
<feature type="region of interest" description="Carboxyltransferase" evidence="9">
    <location>
        <begin position="1495"/>
        <end position="2178"/>
    </location>
</feature>
<feature type="compositionally biased region" description="Low complexity" evidence="10">
    <location>
        <begin position="1109"/>
        <end position="1129"/>
    </location>
</feature>
<feature type="active site" evidence="1">
    <location>
        <position position="335"/>
    </location>
</feature>
<feature type="binding site" evidence="5">
    <location>
        <begin position="196"/>
        <end position="253"/>
    </location>
    <ligand>
        <name>ATP</name>
        <dbReference type="ChEBI" id="CHEBI:30616"/>
    </ligand>
</feature>
<feature type="binding site" evidence="1">
    <location>
        <position position="319"/>
    </location>
    <ligand>
        <name>Mn(2+)</name>
        <dbReference type="ChEBI" id="CHEBI:29035"/>
        <label>1</label>
    </ligand>
</feature>
<feature type="binding site" evidence="1">
    <location>
        <position position="331"/>
    </location>
    <ligand>
        <name>Mn(2+)</name>
        <dbReference type="ChEBI" id="CHEBI:29035"/>
        <label>1</label>
    </ligand>
</feature>
<feature type="binding site" evidence="1">
    <location>
        <position position="331"/>
    </location>
    <ligand>
        <name>Mn(2+)</name>
        <dbReference type="ChEBI" id="CHEBI:29035"/>
        <label>2</label>
    </ligand>
</feature>
<feature type="binding site" evidence="1">
    <location>
        <position position="333"/>
    </location>
    <ligand>
        <name>Mn(2+)</name>
        <dbReference type="ChEBI" id="CHEBI:29035"/>
        <label>2</label>
    </ligand>
</feature>
<feature type="binding site" evidence="1">
    <location>
        <position position="1761"/>
    </location>
    <ligand>
        <name>CoA</name>
        <dbReference type="ChEBI" id="CHEBI:57287"/>
    </ligand>
</feature>
<feature type="binding site" evidence="1">
    <location>
        <position position="2068"/>
    </location>
    <ligand>
        <name>CoA</name>
        <dbReference type="ChEBI" id="CHEBI:57287"/>
    </ligand>
</feature>
<feature type="binding site" evidence="1">
    <location>
        <position position="2070"/>
    </location>
    <ligand>
        <name>CoA</name>
        <dbReference type="ChEBI" id="CHEBI:57287"/>
    </ligand>
</feature>
<feature type="modified residue" description="N6-biotinyllysine" evidence="1 6">
    <location>
        <position position="687"/>
    </location>
</feature>
<name>ACAC_DICDI</name>
<dbReference type="EC" id="6.4.1.2"/>
<dbReference type="EC" id="6.3.4.14"/>
<dbReference type="EMBL" id="AAFI02000111">
    <property type="protein sequence ID" value="EAL63219.1"/>
    <property type="molecule type" value="Genomic_DNA"/>
</dbReference>
<dbReference type="RefSeq" id="XP_636722.1">
    <property type="nucleotide sequence ID" value="XM_631630.1"/>
</dbReference>
<dbReference type="SMR" id="Q54J08"/>
<dbReference type="FunCoup" id="Q54J08">
    <property type="interactions" value="428"/>
</dbReference>
<dbReference type="STRING" id="44689.Q54J08"/>
<dbReference type="GlyGen" id="Q54J08">
    <property type="glycosylation" value="1 site"/>
</dbReference>
<dbReference type="PaxDb" id="44689-DDB0230067"/>
<dbReference type="EnsemblProtists" id="EAL63219">
    <property type="protein sequence ID" value="EAL63219"/>
    <property type="gene ID" value="DDB_G0288387"/>
</dbReference>
<dbReference type="GeneID" id="8626599"/>
<dbReference type="KEGG" id="ddi:DDB_G0288387"/>
<dbReference type="dictyBase" id="DDB_G0288387">
    <property type="gene designation" value="accA"/>
</dbReference>
<dbReference type="VEuPathDB" id="AmoebaDB:DDB_G0288387"/>
<dbReference type="eggNOG" id="KOG0368">
    <property type="taxonomic scope" value="Eukaryota"/>
</dbReference>
<dbReference type="HOGENOM" id="CLU_000395_5_2_1"/>
<dbReference type="InParanoid" id="Q54J08"/>
<dbReference type="OMA" id="PTPKGHC"/>
<dbReference type="PhylomeDB" id="Q54J08"/>
<dbReference type="Reactome" id="R-DDI-196780">
    <property type="pathway name" value="Biotin transport and metabolism"/>
</dbReference>
<dbReference type="Reactome" id="R-DDI-200425">
    <property type="pathway name" value="Carnitine shuttle"/>
</dbReference>
<dbReference type="Reactome" id="R-DDI-75105">
    <property type="pathway name" value="Fatty acyl-CoA biosynthesis"/>
</dbReference>
<dbReference type="UniPathway" id="UPA00655">
    <property type="reaction ID" value="UER00711"/>
</dbReference>
<dbReference type="PRO" id="PR:Q54J08"/>
<dbReference type="Proteomes" id="UP000002195">
    <property type="component" value="Chromosome 5"/>
</dbReference>
<dbReference type="GO" id="GO:0005789">
    <property type="term" value="C:endoplasmic reticulum membrane"/>
    <property type="evidence" value="ECO:0000250"/>
    <property type="project" value="dictyBase"/>
</dbReference>
<dbReference type="GO" id="GO:0005739">
    <property type="term" value="C:mitochondrion"/>
    <property type="evidence" value="ECO:0000318"/>
    <property type="project" value="GO_Central"/>
</dbReference>
<dbReference type="GO" id="GO:0003989">
    <property type="term" value="F:acetyl-CoA carboxylase activity"/>
    <property type="evidence" value="ECO:0000318"/>
    <property type="project" value="GO_Central"/>
</dbReference>
<dbReference type="GO" id="GO:0005524">
    <property type="term" value="F:ATP binding"/>
    <property type="evidence" value="ECO:0007669"/>
    <property type="project" value="UniProtKB-KW"/>
</dbReference>
<dbReference type="GO" id="GO:0004075">
    <property type="term" value="F:biotin carboxylase activity"/>
    <property type="evidence" value="ECO:0000250"/>
    <property type="project" value="dictyBase"/>
</dbReference>
<dbReference type="GO" id="GO:0046872">
    <property type="term" value="F:metal ion binding"/>
    <property type="evidence" value="ECO:0007669"/>
    <property type="project" value="UniProtKB-KW"/>
</dbReference>
<dbReference type="GO" id="GO:0005547">
    <property type="term" value="F:phosphatidylinositol-3,4,5-trisphosphate binding"/>
    <property type="evidence" value="ECO:0007005"/>
    <property type="project" value="dictyBase"/>
</dbReference>
<dbReference type="GO" id="GO:0006633">
    <property type="term" value="P:fatty acid biosynthetic process"/>
    <property type="evidence" value="ECO:0000250"/>
    <property type="project" value="dictyBase"/>
</dbReference>
<dbReference type="GO" id="GO:2001295">
    <property type="term" value="P:malonyl-CoA biosynthetic process"/>
    <property type="evidence" value="ECO:0007669"/>
    <property type="project" value="UniProtKB-UniPathway"/>
</dbReference>
<dbReference type="GO" id="GO:0006606">
    <property type="term" value="P:protein import into nucleus"/>
    <property type="evidence" value="ECO:0000250"/>
    <property type="project" value="dictyBase"/>
</dbReference>
<dbReference type="CDD" id="cd06850">
    <property type="entry name" value="biotinyl_domain"/>
    <property type="match status" value="1"/>
</dbReference>
<dbReference type="FunFam" id="2.40.460.10:FF:000001">
    <property type="entry name" value="Acetyl-CoA carboxylase 1"/>
    <property type="match status" value="1"/>
</dbReference>
<dbReference type="FunFam" id="2.40.50.100:FF:000005">
    <property type="entry name" value="Acetyl-CoA carboxylase 1"/>
    <property type="match status" value="1"/>
</dbReference>
<dbReference type="FunFam" id="3.30.1490.20:FF:000003">
    <property type="entry name" value="acetyl-CoA carboxylase isoform X1"/>
    <property type="match status" value="1"/>
</dbReference>
<dbReference type="FunFam" id="3.40.50.20:FF:000005">
    <property type="entry name" value="acetyl-CoA carboxylase isoform X2"/>
    <property type="match status" value="1"/>
</dbReference>
<dbReference type="FunFam" id="3.90.226.10:FF:000010">
    <property type="entry name" value="acetyl-CoA carboxylase isoform X2"/>
    <property type="match status" value="1"/>
</dbReference>
<dbReference type="Gene3D" id="2.40.50.100">
    <property type="match status" value="1"/>
</dbReference>
<dbReference type="Gene3D" id="3.40.50.20">
    <property type="match status" value="1"/>
</dbReference>
<dbReference type="Gene3D" id="3.90.226.10">
    <property type="entry name" value="2-enoyl-CoA Hydratase, Chain A, domain 1"/>
    <property type="match status" value="2"/>
</dbReference>
<dbReference type="Gene3D" id="3.30.1490.20">
    <property type="entry name" value="ATP-grasp fold, A domain"/>
    <property type="match status" value="1"/>
</dbReference>
<dbReference type="Gene3D" id="3.30.470.20">
    <property type="entry name" value="ATP-grasp fold, B domain"/>
    <property type="match status" value="1"/>
</dbReference>
<dbReference type="Gene3D" id="2.40.460.10">
    <property type="entry name" value="Biotin dependent carboxylase carboxyltransferase"/>
    <property type="match status" value="1"/>
</dbReference>
<dbReference type="Gene3D" id="3.90.1770.10">
    <property type="entry name" value="PreATP-grasp domain"/>
    <property type="match status" value="1"/>
</dbReference>
<dbReference type="InterPro" id="IPR049076">
    <property type="entry name" value="ACCA"/>
</dbReference>
<dbReference type="InterPro" id="IPR049074">
    <property type="entry name" value="ACCA_BT"/>
</dbReference>
<dbReference type="InterPro" id="IPR034733">
    <property type="entry name" value="AcCoA_carboxyl_beta"/>
</dbReference>
<dbReference type="InterPro" id="IPR013537">
    <property type="entry name" value="AcCoA_COase_cen"/>
</dbReference>
<dbReference type="InterPro" id="IPR011761">
    <property type="entry name" value="ATP-grasp"/>
</dbReference>
<dbReference type="InterPro" id="IPR013815">
    <property type="entry name" value="ATP_grasp_subdomain_1"/>
</dbReference>
<dbReference type="InterPro" id="IPR005481">
    <property type="entry name" value="BC-like_N"/>
</dbReference>
<dbReference type="InterPro" id="IPR001882">
    <property type="entry name" value="Biotin_BS"/>
</dbReference>
<dbReference type="InterPro" id="IPR011764">
    <property type="entry name" value="Biotin_carboxylation_dom"/>
</dbReference>
<dbReference type="InterPro" id="IPR005482">
    <property type="entry name" value="Biotin_COase_C"/>
</dbReference>
<dbReference type="InterPro" id="IPR000089">
    <property type="entry name" value="Biotin_lipoyl"/>
</dbReference>
<dbReference type="InterPro" id="IPR005479">
    <property type="entry name" value="CbamoylP_synth_lsu-like_ATP-bd"/>
</dbReference>
<dbReference type="InterPro" id="IPR029045">
    <property type="entry name" value="ClpP/crotonase-like_dom_sf"/>
</dbReference>
<dbReference type="InterPro" id="IPR011763">
    <property type="entry name" value="COA_CT_C"/>
</dbReference>
<dbReference type="InterPro" id="IPR011762">
    <property type="entry name" value="COA_CT_N"/>
</dbReference>
<dbReference type="InterPro" id="IPR016185">
    <property type="entry name" value="PreATP-grasp_dom_sf"/>
</dbReference>
<dbReference type="InterPro" id="IPR011054">
    <property type="entry name" value="Rudment_hybrid_motif"/>
</dbReference>
<dbReference type="InterPro" id="IPR011053">
    <property type="entry name" value="Single_hybrid_motif"/>
</dbReference>
<dbReference type="PANTHER" id="PTHR45728:SF3">
    <property type="entry name" value="ACETYL-COA CARBOXYLASE"/>
    <property type="match status" value="1"/>
</dbReference>
<dbReference type="PANTHER" id="PTHR45728">
    <property type="entry name" value="ACETYL-COA CARBOXYLASE, ISOFORM A"/>
    <property type="match status" value="1"/>
</dbReference>
<dbReference type="Pfam" id="PF08326">
    <property type="entry name" value="ACC_central"/>
    <property type="match status" value="1"/>
</dbReference>
<dbReference type="Pfam" id="PF21385">
    <property type="entry name" value="ACCA_BT"/>
    <property type="match status" value="1"/>
</dbReference>
<dbReference type="Pfam" id="PF02785">
    <property type="entry name" value="Biotin_carb_C"/>
    <property type="match status" value="1"/>
</dbReference>
<dbReference type="Pfam" id="PF00289">
    <property type="entry name" value="Biotin_carb_N"/>
    <property type="match status" value="1"/>
</dbReference>
<dbReference type="Pfam" id="PF00364">
    <property type="entry name" value="Biotin_lipoyl"/>
    <property type="match status" value="1"/>
</dbReference>
<dbReference type="Pfam" id="PF01039">
    <property type="entry name" value="Carboxyl_trans"/>
    <property type="match status" value="1"/>
</dbReference>
<dbReference type="Pfam" id="PF02786">
    <property type="entry name" value="CPSase_L_D2"/>
    <property type="match status" value="1"/>
</dbReference>
<dbReference type="SMART" id="SM00878">
    <property type="entry name" value="Biotin_carb_C"/>
    <property type="match status" value="1"/>
</dbReference>
<dbReference type="SUPFAM" id="SSF52096">
    <property type="entry name" value="ClpP/crotonase"/>
    <property type="match status" value="2"/>
</dbReference>
<dbReference type="SUPFAM" id="SSF56059">
    <property type="entry name" value="Glutathione synthetase ATP-binding domain-like"/>
    <property type="match status" value="1"/>
</dbReference>
<dbReference type="SUPFAM" id="SSF52440">
    <property type="entry name" value="PreATP-grasp domain"/>
    <property type="match status" value="1"/>
</dbReference>
<dbReference type="SUPFAM" id="SSF51246">
    <property type="entry name" value="Rudiment single hybrid motif"/>
    <property type="match status" value="1"/>
</dbReference>
<dbReference type="SUPFAM" id="SSF51230">
    <property type="entry name" value="Single hybrid motif"/>
    <property type="match status" value="1"/>
</dbReference>
<dbReference type="PROSITE" id="PS50975">
    <property type="entry name" value="ATP_GRASP"/>
    <property type="match status" value="1"/>
</dbReference>
<dbReference type="PROSITE" id="PS50979">
    <property type="entry name" value="BC"/>
    <property type="match status" value="1"/>
</dbReference>
<dbReference type="PROSITE" id="PS00188">
    <property type="entry name" value="BIOTIN"/>
    <property type="match status" value="1"/>
</dbReference>
<dbReference type="PROSITE" id="PS50968">
    <property type="entry name" value="BIOTINYL_LIPOYL"/>
    <property type="match status" value="1"/>
</dbReference>
<dbReference type="PROSITE" id="PS50989">
    <property type="entry name" value="COA_CT_CTER"/>
    <property type="match status" value="1"/>
</dbReference>
<dbReference type="PROSITE" id="PS50980">
    <property type="entry name" value="COA_CT_NTER"/>
    <property type="match status" value="1"/>
</dbReference>
<dbReference type="PROSITE" id="PS00867">
    <property type="entry name" value="CPSASE_2"/>
    <property type="match status" value="1"/>
</dbReference>
<accession>Q54J08</accession>
<proteinExistence type="inferred from homology"/>
<reference key="1">
    <citation type="journal article" date="2005" name="Nature">
        <title>The genome of the social amoeba Dictyostelium discoideum.</title>
        <authorList>
            <person name="Eichinger L."/>
            <person name="Pachebat J.A."/>
            <person name="Gloeckner G."/>
            <person name="Rajandream M.A."/>
            <person name="Sucgang R."/>
            <person name="Berriman M."/>
            <person name="Song J."/>
            <person name="Olsen R."/>
            <person name="Szafranski K."/>
            <person name="Xu Q."/>
            <person name="Tunggal B."/>
            <person name="Kummerfeld S."/>
            <person name="Madera M."/>
            <person name="Konfortov B.A."/>
            <person name="Rivero F."/>
            <person name="Bankier A.T."/>
            <person name="Lehmann R."/>
            <person name="Hamlin N."/>
            <person name="Davies R."/>
            <person name="Gaudet P."/>
            <person name="Fey P."/>
            <person name="Pilcher K."/>
            <person name="Chen G."/>
            <person name="Saunders D."/>
            <person name="Sodergren E.J."/>
            <person name="Davis P."/>
            <person name="Kerhornou A."/>
            <person name="Nie X."/>
            <person name="Hall N."/>
            <person name="Anjard C."/>
            <person name="Hemphill L."/>
            <person name="Bason N."/>
            <person name="Farbrother P."/>
            <person name="Desany B."/>
            <person name="Just E."/>
            <person name="Morio T."/>
            <person name="Rost R."/>
            <person name="Churcher C.M."/>
            <person name="Cooper J."/>
            <person name="Haydock S."/>
            <person name="van Driessche N."/>
            <person name="Cronin A."/>
            <person name="Goodhead I."/>
            <person name="Muzny D.M."/>
            <person name="Mourier T."/>
            <person name="Pain A."/>
            <person name="Lu M."/>
            <person name="Harper D."/>
            <person name="Lindsay R."/>
            <person name="Hauser H."/>
            <person name="James K.D."/>
            <person name="Quiles M."/>
            <person name="Madan Babu M."/>
            <person name="Saito T."/>
            <person name="Buchrieser C."/>
            <person name="Wardroper A."/>
            <person name="Felder M."/>
            <person name="Thangavelu M."/>
            <person name="Johnson D."/>
            <person name="Knights A."/>
            <person name="Loulseged H."/>
            <person name="Mungall K.L."/>
            <person name="Oliver K."/>
            <person name="Price C."/>
            <person name="Quail M.A."/>
            <person name="Urushihara H."/>
            <person name="Hernandez J."/>
            <person name="Rabbinowitsch E."/>
            <person name="Steffen D."/>
            <person name="Sanders M."/>
            <person name="Ma J."/>
            <person name="Kohara Y."/>
            <person name="Sharp S."/>
            <person name="Simmonds M.N."/>
            <person name="Spiegler S."/>
            <person name="Tivey A."/>
            <person name="Sugano S."/>
            <person name="White B."/>
            <person name="Walker D."/>
            <person name="Woodward J.R."/>
            <person name="Winckler T."/>
            <person name="Tanaka Y."/>
            <person name="Shaulsky G."/>
            <person name="Schleicher M."/>
            <person name="Weinstock G.M."/>
            <person name="Rosenthal A."/>
            <person name="Cox E.C."/>
            <person name="Chisholm R.L."/>
            <person name="Gibbs R.A."/>
            <person name="Loomis W.F."/>
            <person name="Platzer M."/>
            <person name="Kay R.R."/>
            <person name="Williams J.G."/>
            <person name="Dear P.H."/>
            <person name="Noegel A.A."/>
            <person name="Barrell B.G."/>
            <person name="Kuspa A."/>
        </authorList>
    </citation>
    <scope>NUCLEOTIDE SEQUENCE [LARGE SCALE GENOMIC DNA]</scope>
    <source>
        <strain>AX4</strain>
    </source>
</reference>